<sequence>MQRLSPGEFKTLISKERKSHFITPFALVYKTFCDLGYDQKNSDYFLNNPSEYIIAMRKNCWKEFEPFEKEFTTRMLSYLIDEERIKDMSPYDAIRDFTMEYPTHIYDLALSNTQSRRSRAGKEFESILELLMMGAGIPVDVQGAIGKSFFQKNQIGKLVDLVMPGVVQYTSNKRNTMLISAKTTLRERWQEVPEEVNRTGIREMYLATLDDSFSEETINILYEANVVVVTTIENKNFKYKNNNRVLTFEDMLQSAMELSRKWNNVSYTDSEKEEIQRSILKQIEKYSDFPYVVNYYRNRLSALFD</sequence>
<organism>
    <name type="scientific">Shigella sonnei</name>
    <dbReference type="NCBI Taxonomy" id="624"/>
    <lineage>
        <taxon>Bacteria</taxon>
        <taxon>Pseudomonadati</taxon>
        <taxon>Pseudomonadota</taxon>
        <taxon>Gammaproteobacteria</taxon>
        <taxon>Enterobacterales</taxon>
        <taxon>Enterobacteriaceae</taxon>
        <taxon>Shigella</taxon>
    </lineage>
</organism>
<evidence type="ECO:0000303" key="1">
    <source>
    </source>
</evidence>
<evidence type="ECO:0000303" key="2">
    <source>
    </source>
</evidence>
<protein>
    <recommendedName>
        <fullName evidence="1">Type II restriction enzyme SsoII</fullName>
        <shortName evidence="2">R.SsoII</shortName>
        <ecNumber>3.1.21.4</ecNumber>
    </recommendedName>
    <alternativeName>
        <fullName>Endonuclease SsoII</fullName>
    </alternativeName>
    <alternativeName>
        <fullName>Type-2 restriction enzyme SsoII</fullName>
    </alternativeName>
</protein>
<accession>P34880</accession>
<proteinExistence type="predicted"/>
<comment type="function">
    <text evidence="1">A P subtype restriction enzyme that recognizes the double-stranded sequence 5'-CCNGG-3' and cleaves before C-1.</text>
</comment>
<comment type="catalytic activity">
    <reaction>
        <text>Endonucleolytic cleavage of DNA to give specific double-stranded fragments with terminal 5'-phosphates.</text>
        <dbReference type="EC" id="3.1.21.4"/>
    </reaction>
</comment>
<dbReference type="EC" id="3.1.21.4"/>
<dbReference type="EMBL" id="M86545">
    <property type="protein sequence ID" value="AAA98280.1"/>
    <property type="molecule type" value="Genomic_DNA"/>
</dbReference>
<dbReference type="PIR" id="JU0156">
    <property type="entry name" value="JU0156"/>
</dbReference>
<dbReference type="SMR" id="P34880"/>
<dbReference type="REBASE" id="1739">
    <property type="entry name" value="SsoII"/>
</dbReference>
<dbReference type="PRO" id="PR:P34880"/>
<dbReference type="GO" id="GO:0003677">
    <property type="term" value="F:DNA binding"/>
    <property type="evidence" value="ECO:0007669"/>
    <property type="project" value="InterPro"/>
</dbReference>
<dbReference type="GO" id="GO:0009036">
    <property type="term" value="F:type II site-specific deoxyribonuclease activity"/>
    <property type="evidence" value="ECO:0007669"/>
    <property type="project" value="UniProtKB-EC"/>
</dbReference>
<dbReference type="GO" id="GO:0009307">
    <property type="term" value="P:DNA restriction-modification system"/>
    <property type="evidence" value="ECO:0007669"/>
    <property type="project" value="UniProtKB-KW"/>
</dbReference>
<dbReference type="CDD" id="cd22320">
    <property type="entry name" value="Ecl18kI-like"/>
    <property type="match status" value="1"/>
</dbReference>
<dbReference type="Gene3D" id="3.40.91.80">
    <property type="match status" value="1"/>
</dbReference>
<dbReference type="InterPro" id="IPR038365">
    <property type="entry name" value="EcoRII_C_sf"/>
</dbReference>
<dbReference type="InterPro" id="IPR011335">
    <property type="entry name" value="Restrct_endonuc-II-like"/>
</dbReference>
<dbReference type="InterPro" id="IPR015109">
    <property type="entry name" value="Restrct_endonuc_II_EcoRII_C"/>
</dbReference>
<dbReference type="Pfam" id="PF09019">
    <property type="entry name" value="EcoRII-C"/>
    <property type="match status" value="1"/>
</dbReference>
<dbReference type="SUPFAM" id="SSF52980">
    <property type="entry name" value="Restriction endonuclease-like"/>
    <property type="match status" value="1"/>
</dbReference>
<name>T2S2_SHISO</name>
<reference key="1">
    <citation type="journal article" date="1993" name="Gene">
        <title>Analysis of the nucleotide and derived amino acid sequences of the SsoII restriction endonuclease and methyltransferase.</title>
        <authorList>
            <person name="Karyagina A.S."/>
            <person name="Lunin V.G."/>
            <person name="Degtyarenko K.N."/>
            <person name="Uvarov V.Y."/>
            <person name="Nikolskaya I.I."/>
        </authorList>
    </citation>
    <scope>NUCLEOTIDE SEQUENCE [GENOMIC DNA]</scope>
    <source>
        <strain>47</strain>
    </source>
</reference>
<reference key="2">
    <citation type="journal article" date="2003" name="Nucleic Acids Res.">
        <title>A nomenclature for restriction enzymes, DNA methyltransferases, homing endonucleases and their genes.</title>
        <authorList>
            <person name="Roberts R.J."/>
            <person name="Belfort M."/>
            <person name="Bestor T."/>
            <person name="Bhagwat A.S."/>
            <person name="Bickle T.A."/>
            <person name="Bitinaite J."/>
            <person name="Blumenthal R.M."/>
            <person name="Degtyarev S.K."/>
            <person name="Dryden D.T."/>
            <person name="Dybvig K."/>
            <person name="Firman K."/>
            <person name="Gromova E.S."/>
            <person name="Gumport R.I."/>
            <person name="Halford S.E."/>
            <person name="Hattman S."/>
            <person name="Heitman J."/>
            <person name="Hornby D.P."/>
            <person name="Janulaitis A."/>
            <person name="Jeltsch A."/>
            <person name="Josephsen J."/>
            <person name="Kiss A."/>
            <person name="Klaenhammer T.R."/>
            <person name="Kobayashi I."/>
            <person name="Kong H."/>
            <person name="Krueger D.H."/>
            <person name="Lacks S."/>
            <person name="Marinus M.G."/>
            <person name="Miyahara M."/>
            <person name="Morgan R.D."/>
            <person name="Murray N.E."/>
            <person name="Nagaraja V."/>
            <person name="Piekarowicz A."/>
            <person name="Pingoud A."/>
            <person name="Raleigh E."/>
            <person name="Rao D.N."/>
            <person name="Reich N."/>
            <person name="Repin V.E."/>
            <person name="Selker E.U."/>
            <person name="Shaw P.C."/>
            <person name="Stein D.C."/>
            <person name="Stoddard B.L."/>
            <person name="Szybalski W."/>
            <person name="Trautner T.A."/>
            <person name="Van Etten J.L."/>
            <person name="Vitor J.M."/>
            <person name="Wilson G.G."/>
            <person name="Xu S.Y."/>
        </authorList>
    </citation>
    <scope>NOMENCLATURE</scope>
    <scope>SUBTYPE</scope>
</reference>
<geneLocation type="plasmid">
    <name>P4</name>
</geneLocation>
<gene>
    <name type="primary">ssoIIR</name>
</gene>
<feature type="chain" id="PRO_0000077363" description="Type II restriction enzyme SsoII">
    <location>
        <begin position="1"/>
        <end position="305"/>
    </location>
</feature>
<keyword id="KW-0255">Endonuclease</keyword>
<keyword id="KW-0378">Hydrolase</keyword>
<keyword id="KW-0540">Nuclease</keyword>
<keyword id="KW-0614">Plasmid</keyword>
<keyword id="KW-0680">Restriction system</keyword>